<reference key="1">
    <citation type="journal article" date="2006" name="Proc. Natl. Acad. Sci. U.S.A.">
        <title>Molecular genetic anatomy of inter- and intraserotype variation in the human bacterial pathogen group A Streptococcus.</title>
        <authorList>
            <person name="Beres S.B."/>
            <person name="Richter E.W."/>
            <person name="Nagiec M.J."/>
            <person name="Sumby P."/>
            <person name="Porcella S.F."/>
            <person name="DeLeo F.R."/>
            <person name="Musser J.M."/>
        </authorList>
    </citation>
    <scope>NUCLEOTIDE SEQUENCE [LARGE SCALE GENOMIC DNA]</scope>
    <source>
        <strain>MGAS2096</strain>
    </source>
</reference>
<accession>Q1JBV6</accession>
<sequence length="384" mass="43838">MTKPIITFNNVSKTFEDSGTQVLKNINFDLEEGKFYTLLGASGSGKSTILNIMAGLLDASSGDIYLDGERINDLPINKRDIHTVFQNYALFPHMTVFENVAFALKLKKVDKKEIAKRVKETLKMVQLEGYENRSIQKLSGGQRQRVAIARAIINQPRVVLLDEPLSALDLKLRTEMQYELRELQQRLGITFVFVTHDQEEALAMSDWIFVMNEGEIVQSGTPVDIYDEPINHFVANFIGESNIINGTMIEDYLVSFNGKEFESVDGGMRPNEPVEVVIRPEDLQITLPEEGKLQVKVDTQLFRGVHYEIIAYDELGNEWMIHSTRKAIEGEVIGLDFTPEDLHIMRLNETEEEFDARIEEYVEMDEPEDGLINAIEEERNEENL</sequence>
<name>POTA_STRPB</name>
<gene>
    <name evidence="1" type="primary">potA</name>
    <name type="ordered locus">MGAS2096_Spy0900</name>
</gene>
<feature type="chain" id="PRO_0000286306" description="Spermidine/putrescine import ATP-binding protein PotA">
    <location>
        <begin position="1"/>
        <end position="384"/>
    </location>
</feature>
<feature type="domain" description="ABC transporter" evidence="1">
    <location>
        <begin position="6"/>
        <end position="238"/>
    </location>
</feature>
<feature type="binding site" evidence="1">
    <location>
        <begin position="40"/>
        <end position="47"/>
    </location>
    <ligand>
        <name>ATP</name>
        <dbReference type="ChEBI" id="CHEBI:30616"/>
    </ligand>
</feature>
<evidence type="ECO:0000255" key="1">
    <source>
        <dbReference type="HAMAP-Rule" id="MF_01726"/>
    </source>
</evidence>
<keyword id="KW-0067">ATP-binding</keyword>
<keyword id="KW-1003">Cell membrane</keyword>
<keyword id="KW-0472">Membrane</keyword>
<keyword id="KW-0547">Nucleotide-binding</keyword>
<keyword id="KW-1278">Translocase</keyword>
<keyword id="KW-0813">Transport</keyword>
<dbReference type="EC" id="7.6.2.11" evidence="1"/>
<dbReference type="EMBL" id="CP000261">
    <property type="protein sequence ID" value="ABF35952.1"/>
    <property type="molecule type" value="Genomic_DNA"/>
</dbReference>
<dbReference type="SMR" id="Q1JBV6"/>
<dbReference type="KEGG" id="spj:MGAS2096_Spy0900"/>
<dbReference type="HOGENOM" id="CLU_000604_1_1_9"/>
<dbReference type="GO" id="GO:0043190">
    <property type="term" value="C:ATP-binding cassette (ABC) transporter complex"/>
    <property type="evidence" value="ECO:0007669"/>
    <property type="project" value="InterPro"/>
</dbReference>
<dbReference type="GO" id="GO:0015417">
    <property type="term" value="F:ABC-type polyamine transporter activity"/>
    <property type="evidence" value="ECO:0007669"/>
    <property type="project" value="UniProtKB-EC"/>
</dbReference>
<dbReference type="GO" id="GO:0005524">
    <property type="term" value="F:ATP binding"/>
    <property type="evidence" value="ECO:0007669"/>
    <property type="project" value="UniProtKB-KW"/>
</dbReference>
<dbReference type="GO" id="GO:0016887">
    <property type="term" value="F:ATP hydrolysis activity"/>
    <property type="evidence" value="ECO:0007669"/>
    <property type="project" value="InterPro"/>
</dbReference>
<dbReference type="FunFam" id="3.40.50.300:FF:000042">
    <property type="entry name" value="Maltose/maltodextrin ABC transporter, ATP-binding protein"/>
    <property type="match status" value="1"/>
</dbReference>
<dbReference type="Gene3D" id="2.40.50.100">
    <property type="match status" value="1"/>
</dbReference>
<dbReference type="Gene3D" id="3.40.50.300">
    <property type="entry name" value="P-loop containing nucleotide triphosphate hydrolases"/>
    <property type="match status" value="1"/>
</dbReference>
<dbReference type="InterPro" id="IPR003593">
    <property type="entry name" value="AAA+_ATPase"/>
</dbReference>
<dbReference type="InterPro" id="IPR050093">
    <property type="entry name" value="ABC_SmlMolc_Importer"/>
</dbReference>
<dbReference type="InterPro" id="IPR003439">
    <property type="entry name" value="ABC_transporter-like_ATP-bd"/>
</dbReference>
<dbReference type="InterPro" id="IPR017871">
    <property type="entry name" value="ABC_transporter-like_CS"/>
</dbReference>
<dbReference type="InterPro" id="IPR008995">
    <property type="entry name" value="Mo/tungstate-bd_C_term_dom"/>
</dbReference>
<dbReference type="InterPro" id="IPR027417">
    <property type="entry name" value="P-loop_NTPase"/>
</dbReference>
<dbReference type="InterPro" id="IPR005893">
    <property type="entry name" value="PotA-like"/>
</dbReference>
<dbReference type="InterPro" id="IPR013611">
    <property type="entry name" value="Transp-assoc_OB_typ2"/>
</dbReference>
<dbReference type="NCBIfam" id="TIGR01187">
    <property type="entry name" value="potA"/>
    <property type="match status" value="1"/>
</dbReference>
<dbReference type="PANTHER" id="PTHR42781">
    <property type="entry name" value="SPERMIDINE/PUTRESCINE IMPORT ATP-BINDING PROTEIN POTA"/>
    <property type="match status" value="1"/>
</dbReference>
<dbReference type="PANTHER" id="PTHR42781:SF4">
    <property type="entry name" value="SPERMIDINE_PUTRESCINE IMPORT ATP-BINDING PROTEIN POTA"/>
    <property type="match status" value="1"/>
</dbReference>
<dbReference type="Pfam" id="PF00005">
    <property type="entry name" value="ABC_tran"/>
    <property type="match status" value="1"/>
</dbReference>
<dbReference type="Pfam" id="PF08402">
    <property type="entry name" value="TOBE_2"/>
    <property type="match status" value="1"/>
</dbReference>
<dbReference type="SMART" id="SM00382">
    <property type="entry name" value="AAA"/>
    <property type="match status" value="1"/>
</dbReference>
<dbReference type="SUPFAM" id="SSF50331">
    <property type="entry name" value="MOP-like"/>
    <property type="match status" value="1"/>
</dbReference>
<dbReference type="SUPFAM" id="SSF52540">
    <property type="entry name" value="P-loop containing nucleoside triphosphate hydrolases"/>
    <property type="match status" value="1"/>
</dbReference>
<dbReference type="PROSITE" id="PS00211">
    <property type="entry name" value="ABC_TRANSPORTER_1"/>
    <property type="match status" value="1"/>
</dbReference>
<dbReference type="PROSITE" id="PS50893">
    <property type="entry name" value="ABC_TRANSPORTER_2"/>
    <property type="match status" value="1"/>
</dbReference>
<dbReference type="PROSITE" id="PS51305">
    <property type="entry name" value="POTA"/>
    <property type="match status" value="1"/>
</dbReference>
<proteinExistence type="inferred from homology"/>
<comment type="function">
    <text evidence="1">Part of the ABC transporter complex PotABCD involved in spermidine/putrescine import. Responsible for energy coupling to the transport system.</text>
</comment>
<comment type="catalytic activity">
    <reaction evidence="1">
        <text>ATP + H2O + polyamine-[polyamine-binding protein]Side 1 = ADP + phosphate + polyamineSide 2 + [polyamine-binding protein]Side 1.</text>
        <dbReference type="EC" id="7.6.2.11"/>
    </reaction>
</comment>
<comment type="subunit">
    <text evidence="1">The complex is composed of two ATP-binding proteins (PotA), two transmembrane proteins (PotB and PotC) and a solute-binding protein (PotD).</text>
</comment>
<comment type="subcellular location">
    <subcellularLocation>
        <location evidence="1">Cell membrane</location>
        <topology evidence="1">Peripheral membrane protein</topology>
    </subcellularLocation>
</comment>
<comment type="similarity">
    <text evidence="1">Belongs to the ABC transporter superfamily. Spermidine/putrescine importer (TC 3.A.1.11.1) family.</text>
</comment>
<protein>
    <recommendedName>
        <fullName evidence="1">Spermidine/putrescine import ATP-binding protein PotA</fullName>
        <ecNumber evidence="1">7.6.2.11</ecNumber>
    </recommendedName>
</protein>
<organism>
    <name type="scientific">Streptococcus pyogenes serotype M12 (strain MGAS2096)</name>
    <dbReference type="NCBI Taxonomy" id="370553"/>
    <lineage>
        <taxon>Bacteria</taxon>
        <taxon>Bacillati</taxon>
        <taxon>Bacillota</taxon>
        <taxon>Bacilli</taxon>
        <taxon>Lactobacillales</taxon>
        <taxon>Streptococcaceae</taxon>
        <taxon>Streptococcus</taxon>
    </lineage>
</organism>